<protein>
    <recommendedName>
        <fullName evidence="1">5-dehydro-2-deoxygluconokinase</fullName>
        <ecNumber evidence="1">2.7.1.92</ecNumber>
    </recommendedName>
    <alternativeName>
        <fullName evidence="1">2-deoxy-5-keto-D-gluconate kinase</fullName>
        <shortName evidence="1">DKG kinase</shortName>
    </alternativeName>
</protein>
<gene>
    <name evidence="1" type="primary">iolC</name>
    <name type="ordered locus">CLH_1253</name>
</gene>
<keyword id="KW-0067">ATP-binding</keyword>
<keyword id="KW-0418">Kinase</keyword>
<keyword id="KW-0547">Nucleotide-binding</keyword>
<keyword id="KW-0808">Transferase</keyword>
<name>IOLC_CLOBA</name>
<dbReference type="EC" id="2.7.1.92" evidence="1"/>
<dbReference type="EMBL" id="CP001078">
    <property type="protein sequence ID" value="ACD53406.1"/>
    <property type="molecule type" value="Genomic_DNA"/>
</dbReference>
<dbReference type="RefSeq" id="WP_012451315.1">
    <property type="nucleotide sequence ID" value="NC_010723.1"/>
</dbReference>
<dbReference type="SMR" id="B2V4J8"/>
<dbReference type="KEGG" id="cbt:CLH_1253"/>
<dbReference type="HOGENOM" id="CLU_027634_6_0_9"/>
<dbReference type="UniPathway" id="UPA00076">
    <property type="reaction ID" value="UER00146"/>
</dbReference>
<dbReference type="GO" id="GO:0047590">
    <property type="term" value="F:5-dehydro-2-deoxygluconokinase activity"/>
    <property type="evidence" value="ECO:0007669"/>
    <property type="project" value="UniProtKB-UniRule"/>
</dbReference>
<dbReference type="GO" id="GO:0005524">
    <property type="term" value="F:ATP binding"/>
    <property type="evidence" value="ECO:0007669"/>
    <property type="project" value="UniProtKB-UniRule"/>
</dbReference>
<dbReference type="GO" id="GO:0019310">
    <property type="term" value="P:inositol catabolic process"/>
    <property type="evidence" value="ECO:0007669"/>
    <property type="project" value="UniProtKB-UniRule"/>
</dbReference>
<dbReference type="CDD" id="cd01166">
    <property type="entry name" value="KdgK"/>
    <property type="match status" value="1"/>
</dbReference>
<dbReference type="Gene3D" id="3.40.1190.20">
    <property type="match status" value="1"/>
</dbReference>
<dbReference type="Gene3D" id="2.20.150.10">
    <property type="entry name" value="putative 5-dehydro-2- deoxygluconokinase"/>
    <property type="match status" value="1"/>
</dbReference>
<dbReference type="HAMAP" id="MF_01668">
    <property type="entry name" value="IolC"/>
    <property type="match status" value="1"/>
</dbReference>
<dbReference type="InterPro" id="IPR002173">
    <property type="entry name" value="Carboh/pur_kinase_PfkB_CS"/>
</dbReference>
<dbReference type="InterPro" id="IPR022841">
    <property type="entry name" value="DKG_kinase_firmi"/>
</dbReference>
<dbReference type="InterPro" id="IPR030830">
    <property type="entry name" value="Myo_inos_IolC"/>
</dbReference>
<dbReference type="InterPro" id="IPR023314">
    <property type="entry name" value="Myo_inos_IolC-like_sf"/>
</dbReference>
<dbReference type="InterPro" id="IPR050306">
    <property type="entry name" value="PfkB_Carbo_kinase"/>
</dbReference>
<dbReference type="InterPro" id="IPR011611">
    <property type="entry name" value="PfkB_dom"/>
</dbReference>
<dbReference type="InterPro" id="IPR029056">
    <property type="entry name" value="Ribokinase-like"/>
</dbReference>
<dbReference type="NCBIfam" id="TIGR04382">
    <property type="entry name" value="myo_inos_iolC_N"/>
    <property type="match status" value="1"/>
</dbReference>
<dbReference type="PANTHER" id="PTHR43085:SF49">
    <property type="entry name" value="5-DEHYDRO-2-DEOXYGLUCONOKINASE"/>
    <property type="match status" value="1"/>
</dbReference>
<dbReference type="PANTHER" id="PTHR43085">
    <property type="entry name" value="HEXOKINASE FAMILY MEMBER"/>
    <property type="match status" value="1"/>
</dbReference>
<dbReference type="Pfam" id="PF00294">
    <property type="entry name" value="PfkB"/>
    <property type="match status" value="1"/>
</dbReference>
<dbReference type="SUPFAM" id="SSF53613">
    <property type="entry name" value="Ribokinase-like"/>
    <property type="match status" value="1"/>
</dbReference>
<dbReference type="PROSITE" id="PS00584">
    <property type="entry name" value="PFKB_KINASES_2"/>
    <property type="match status" value="1"/>
</dbReference>
<sequence>MGYIKFQKDRKFEIVPIGRVAIDFNPTDINRPLSKSMTFKKYLGGSPANIAVGLSRLGKKVGFIGKVSKDQFGKFVVDYFNNEGIDTSQIKYAENGESLGLTFTEIASPTESSILMYRNGIADLELDVNEIDEEYIKNTKAIVISGTALAKSPSREAALKALELAKKNDTVVIFDVDYREYNWKNKDEIAIYYSIVGKQSDIVMGSREEFDLMESLIVKEKSTDEESAKRWLGFGNKIVVIKHGKEGSTAYTNDGKSYKIKPFPVKLLKSFGGGDAYASAFIYGILEEWDIMDALEFGSASAAMLVASHSCSEDMPTVKEINEFIKEKKEQYGEMIARG</sequence>
<accession>B2V4J8</accession>
<feature type="chain" id="PRO_0000352294" description="5-dehydro-2-deoxygluconokinase">
    <location>
        <begin position="1"/>
        <end position="339"/>
    </location>
</feature>
<organism>
    <name type="scientific">Clostridium botulinum (strain Alaska E43 / Type E3)</name>
    <dbReference type="NCBI Taxonomy" id="508767"/>
    <lineage>
        <taxon>Bacteria</taxon>
        <taxon>Bacillati</taxon>
        <taxon>Bacillota</taxon>
        <taxon>Clostridia</taxon>
        <taxon>Eubacteriales</taxon>
        <taxon>Clostridiaceae</taxon>
        <taxon>Clostridium</taxon>
    </lineage>
</organism>
<evidence type="ECO:0000255" key="1">
    <source>
        <dbReference type="HAMAP-Rule" id="MF_01668"/>
    </source>
</evidence>
<proteinExistence type="inferred from homology"/>
<reference key="1">
    <citation type="submission" date="2008-05" db="EMBL/GenBank/DDBJ databases">
        <title>Complete genome sequence of Clostridium botulinum E3 str. Alaska E43.</title>
        <authorList>
            <person name="Brinkac L.M."/>
            <person name="Brown J.L."/>
            <person name="Bruce D."/>
            <person name="Detter C."/>
            <person name="Munk C."/>
            <person name="Smith L.A."/>
            <person name="Smith T.J."/>
            <person name="Sutton G."/>
            <person name="Brettin T.S."/>
        </authorList>
    </citation>
    <scope>NUCLEOTIDE SEQUENCE [LARGE SCALE GENOMIC DNA]</scope>
    <source>
        <strain>Alaska E43 / Type E3</strain>
    </source>
</reference>
<comment type="function">
    <text evidence="1">Catalyzes the phosphorylation of 5-dehydro-2-deoxy-D-gluconate (2-deoxy-5-keto-D-gluconate or DKG) to 6-phospho-5-dehydro-2-deoxy-D-gluconate (DKGP).</text>
</comment>
<comment type="catalytic activity">
    <reaction evidence="1">
        <text>5-dehydro-2-deoxy-D-gluconate + ATP = 6-phospho-5-dehydro-2-deoxy-D-gluconate + ADP + H(+)</text>
        <dbReference type="Rhea" id="RHEA:13497"/>
        <dbReference type="ChEBI" id="CHEBI:15378"/>
        <dbReference type="ChEBI" id="CHEBI:16669"/>
        <dbReference type="ChEBI" id="CHEBI:30616"/>
        <dbReference type="ChEBI" id="CHEBI:57949"/>
        <dbReference type="ChEBI" id="CHEBI:456216"/>
        <dbReference type="EC" id="2.7.1.92"/>
    </reaction>
</comment>
<comment type="pathway">
    <text evidence="1">Polyol metabolism; myo-inositol degradation into acetyl-CoA; acetyl-CoA from myo-inositol: step 5/7.</text>
</comment>
<comment type="similarity">
    <text evidence="1">Belongs to the carbohydrate kinase PfkB family.</text>
</comment>